<comment type="function">
    <text evidence="1">Part of the ABC transporter complex ThiBPQ involved in thiamine import. Responsible for energy coupling to the transport system.</text>
</comment>
<comment type="catalytic activity">
    <reaction evidence="1">
        <text>thiamine(out) + ATP + H2O = thiamine(in) + ADP + phosphate + H(+)</text>
        <dbReference type="Rhea" id="RHEA:29811"/>
        <dbReference type="ChEBI" id="CHEBI:15377"/>
        <dbReference type="ChEBI" id="CHEBI:15378"/>
        <dbReference type="ChEBI" id="CHEBI:18385"/>
        <dbReference type="ChEBI" id="CHEBI:30616"/>
        <dbReference type="ChEBI" id="CHEBI:43474"/>
        <dbReference type="ChEBI" id="CHEBI:456216"/>
        <dbReference type="EC" id="7.6.2.15"/>
    </reaction>
</comment>
<comment type="subunit">
    <text evidence="1">The complex is composed of two ATP-binding proteins (ThiQ), two transmembrane proteins (ThiP) and a solute-binding protein (ThiB).</text>
</comment>
<comment type="subcellular location">
    <subcellularLocation>
        <location evidence="1">Cell inner membrane</location>
        <topology evidence="1">Peripheral membrane protein</topology>
    </subcellularLocation>
</comment>
<comment type="similarity">
    <text evidence="1">Belongs to the ABC transporter superfamily. Thiamine importer (TC 3.A.1.19.1) family.</text>
</comment>
<comment type="sequence caution" evidence="2">
    <conflict type="erroneous initiation">
        <sequence resource="EMBL-CDS" id="CAG18843"/>
    </conflict>
</comment>
<sequence>MIQLDKLNHCYTHQGNASHNESLSMSFDLIAKKGDIIALIGPSGAGKSSLLAMIAGFLKPDSGELHLNGELITTQAPANRPLSMLFQEHNLFPHLTVFENIGLGIHPGLKLSRQEKEDIVVAAARVGVNKYLDRLPEQLSGGQKQRVALARCLIRQRPLLLLDEPFSALDPALRKEMLELVKHIAREQKTTVLMITHSPDDALKISNKCAFIHNGKIRVFGPTQQVLGEPKDEVLIQYLGF</sequence>
<name>THIQ_PHOPR</name>
<gene>
    <name evidence="1" type="primary">thiQ</name>
    <name type="ordered locus">PBPRA0411</name>
</gene>
<proteinExistence type="inferred from homology"/>
<dbReference type="EC" id="7.6.2.15" evidence="1"/>
<dbReference type="EMBL" id="CR378664">
    <property type="protein sequence ID" value="CAG18843.1"/>
    <property type="status" value="ALT_INIT"/>
    <property type="molecule type" value="Genomic_DNA"/>
</dbReference>
<dbReference type="RefSeq" id="WP_041394627.1">
    <property type="nucleotide sequence ID" value="NC_006370.1"/>
</dbReference>
<dbReference type="SMR" id="Q6LV32"/>
<dbReference type="STRING" id="298386.PBPRA0411"/>
<dbReference type="KEGG" id="ppr:PBPRA0411"/>
<dbReference type="eggNOG" id="COG3840">
    <property type="taxonomic scope" value="Bacteria"/>
</dbReference>
<dbReference type="HOGENOM" id="CLU_000604_1_22_6"/>
<dbReference type="Proteomes" id="UP000000593">
    <property type="component" value="Chromosome 1"/>
</dbReference>
<dbReference type="GO" id="GO:0005886">
    <property type="term" value="C:plasma membrane"/>
    <property type="evidence" value="ECO:0007669"/>
    <property type="project" value="UniProtKB-SubCell"/>
</dbReference>
<dbReference type="GO" id="GO:0048502">
    <property type="term" value="F:ABC-type thiamine transporter activity"/>
    <property type="evidence" value="ECO:0007669"/>
    <property type="project" value="UniProtKB-EC"/>
</dbReference>
<dbReference type="GO" id="GO:0005524">
    <property type="term" value="F:ATP binding"/>
    <property type="evidence" value="ECO:0007669"/>
    <property type="project" value="UniProtKB-KW"/>
</dbReference>
<dbReference type="GO" id="GO:0016887">
    <property type="term" value="F:ATP hydrolysis activity"/>
    <property type="evidence" value="ECO:0007669"/>
    <property type="project" value="InterPro"/>
</dbReference>
<dbReference type="Gene3D" id="3.40.50.300">
    <property type="entry name" value="P-loop containing nucleotide triphosphate hydrolases"/>
    <property type="match status" value="1"/>
</dbReference>
<dbReference type="InterPro" id="IPR003593">
    <property type="entry name" value="AAA+_ATPase"/>
</dbReference>
<dbReference type="InterPro" id="IPR050093">
    <property type="entry name" value="ABC_SmlMolc_Importer"/>
</dbReference>
<dbReference type="InterPro" id="IPR003439">
    <property type="entry name" value="ABC_transporter-like_ATP-bd"/>
</dbReference>
<dbReference type="InterPro" id="IPR017871">
    <property type="entry name" value="ABC_transporter-like_CS"/>
</dbReference>
<dbReference type="InterPro" id="IPR027417">
    <property type="entry name" value="P-loop_NTPase"/>
</dbReference>
<dbReference type="InterPro" id="IPR005968">
    <property type="entry name" value="Thiamine_ABC_ThiQ"/>
</dbReference>
<dbReference type="NCBIfam" id="TIGR01277">
    <property type="entry name" value="thiQ"/>
    <property type="match status" value="1"/>
</dbReference>
<dbReference type="PANTHER" id="PTHR42781">
    <property type="entry name" value="SPERMIDINE/PUTRESCINE IMPORT ATP-BINDING PROTEIN POTA"/>
    <property type="match status" value="1"/>
</dbReference>
<dbReference type="PANTHER" id="PTHR42781:SF1">
    <property type="entry name" value="THIAMINE IMPORT ATP-BINDING PROTEIN THIQ"/>
    <property type="match status" value="1"/>
</dbReference>
<dbReference type="Pfam" id="PF00005">
    <property type="entry name" value="ABC_tran"/>
    <property type="match status" value="1"/>
</dbReference>
<dbReference type="SMART" id="SM00382">
    <property type="entry name" value="AAA"/>
    <property type="match status" value="1"/>
</dbReference>
<dbReference type="SUPFAM" id="SSF52540">
    <property type="entry name" value="P-loop containing nucleoside triphosphate hydrolases"/>
    <property type="match status" value="1"/>
</dbReference>
<dbReference type="PROSITE" id="PS00211">
    <property type="entry name" value="ABC_TRANSPORTER_1"/>
    <property type="match status" value="1"/>
</dbReference>
<dbReference type="PROSITE" id="PS50893">
    <property type="entry name" value="ABC_TRANSPORTER_2"/>
    <property type="match status" value="1"/>
</dbReference>
<dbReference type="PROSITE" id="PS51288">
    <property type="entry name" value="THIQ"/>
    <property type="match status" value="1"/>
</dbReference>
<organism>
    <name type="scientific">Photobacterium profundum (strain SS9)</name>
    <dbReference type="NCBI Taxonomy" id="298386"/>
    <lineage>
        <taxon>Bacteria</taxon>
        <taxon>Pseudomonadati</taxon>
        <taxon>Pseudomonadota</taxon>
        <taxon>Gammaproteobacteria</taxon>
        <taxon>Vibrionales</taxon>
        <taxon>Vibrionaceae</taxon>
        <taxon>Photobacterium</taxon>
    </lineage>
</organism>
<keyword id="KW-0067">ATP-binding</keyword>
<keyword id="KW-0997">Cell inner membrane</keyword>
<keyword id="KW-1003">Cell membrane</keyword>
<keyword id="KW-0472">Membrane</keyword>
<keyword id="KW-0547">Nucleotide-binding</keyword>
<keyword id="KW-1185">Reference proteome</keyword>
<keyword id="KW-1278">Translocase</keyword>
<keyword id="KW-0813">Transport</keyword>
<protein>
    <recommendedName>
        <fullName evidence="1">Thiamine import ATP-binding protein ThiQ</fullName>
        <ecNumber evidence="1">7.6.2.15</ecNumber>
    </recommendedName>
</protein>
<reference key="1">
    <citation type="journal article" date="2005" name="Science">
        <title>Life at depth: Photobacterium profundum genome sequence and expression analysis.</title>
        <authorList>
            <person name="Vezzi A."/>
            <person name="Campanaro S."/>
            <person name="D'Angelo M."/>
            <person name="Simonato F."/>
            <person name="Vitulo N."/>
            <person name="Lauro F.M."/>
            <person name="Cestaro A."/>
            <person name="Malacrida G."/>
            <person name="Simionati B."/>
            <person name="Cannata N."/>
            <person name="Romualdi C."/>
            <person name="Bartlett D.H."/>
            <person name="Valle G."/>
        </authorList>
    </citation>
    <scope>NUCLEOTIDE SEQUENCE [LARGE SCALE GENOMIC DNA]</scope>
    <source>
        <strain>ATCC BAA-1253 / SS9</strain>
    </source>
</reference>
<accession>Q6LV32</accession>
<feature type="chain" id="PRO_0000274449" description="Thiamine import ATP-binding protein ThiQ">
    <location>
        <begin position="1"/>
        <end position="241"/>
    </location>
</feature>
<feature type="domain" description="ABC transporter" evidence="1">
    <location>
        <begin position="2"/>
        <end position="239"/>
    </location>
</feature>
<feature type="binding site" evidence="1">
    <location>
        <begin position="41"/>
        <end position="48"/>
    </location>
    <ligand>
        <name>ATP</name>
        <dbReference type="ChEBI" id="CHEBI:30616"/>
    </ligand>
</feature>
<evidence type="ECO:0000255" key="1">
    <source>
        <dbReference type="HAMAP-Rule" id="MF_01723"/>
    </source>
</evidence>
<evidence type="ECO:0000305" key="2"/>